<gene>
    <name type="primary">nadB1</name>
    <name type="ordered locus">RSc2447</name>
    <name type="ORF">RS01159</name>
</gene>
<organism>
    <name type="scientific">Ralstonia nicotianae (strain ATCC BAA-1114 / GMI1000)</name>
    <name type="common">Ralstonia solanacearum</name>
    <dbReference type="NCBI Taxonomy" id="267608"/>
    <lineage>
        <taxon>Bacteria</taxon>
        <taxon>Pseudomonadati</taxon>
        <taxon>Pseudomonadota</taxon>
        <taxon>Betaproteobacteria</taxon>
        <taxon>Burkholderiales</taxon>
        <taxon>Burkholderiaceae</taxon>
        <taxon>Ralstonia</taxon>
        <taxon>Ralstonia solanacearum species complex</taxon>
    </lineage>
</organism>
<comment type="function">
    <text evidence="1">Catalyzes the oxidation of L-aspartate to iminoaspartate, the first step in the de novo biosynthesis of NAD(+).</text>
</comment>
<comment type="catalytic activity">
    <reaction evidence="1">
        <text>L-aspartate + O2 = iminosuccinate + H2O2</text>
        <dbReference type="Rhea" id="RHEA:25876"/>
        <dbReference type="ChEBI" id="CHEBI:15379"/>
        <dbReference type="ChEBI" id="CHEBI:16240"/>
        <dbReference type="ChEBI" id="CHEBI:29991"/>
        <dbReference type="ChEBI" id="CHEBI:77875"/>
        <dbReference type="EC" id="1.4.3.16"/>
    </reaction>
    <physiologicalReaction direction="left-to-right" evidence="1">
        <dbReference type="Rhea" id="RHEA:25877"/>
    </physiologicalReaction>
</comment>
<comment type="cofactor">
    <cofactor evidence="1">
        <name>FAD</name>
        <dbReference type="ChEBI" id="CHEBI:57692"/>
    </cofactor>
    <text evidence="1">Binds 1 FAD per subunit.</text>
</comment>
<comment type="pathway">
    <text evidence="1">Cofactor biosynthesis; NAD(+) biosynthesis; iminoaspartate from L-aspartate (oxidase route): step 1/1.</text>
</comment>
<comment type="subcellular location">
    <subcellularLocation>
        <location evidence="1">Cytoplasm</location>
    </subcellularLocation>
</comment>
<comment type="similarity">
    <text evidence="2">Belongs to the FAD-dependent oxidoreductase 2 family. NadB subfamily.</text>
</comment>
<keyword id="KW-0963">Cytoplasm</keyword>
<keyword id="KW-0274">FAD</keyword>
<keyword id="KW-0285">Flavoprotein</keyword>
<keyword id="KW-0547">Nucleotide-binding</keyword>
<keyword id="KW-0560">Oxidoreductase</keyword>
<keyword id="KW-0662">Pyridine nucleotide biosynthesis</keyword>
<keyword id="KW-1185">Reference proteome</keyword>
<reference key="1">
    <citation type="journal article" date="2002" name="Nature">
        <title>Genome sequence of the plant pathogen Ralstonia solanacearum.</title>
        <authorList>
            <person name="Salanoubat M."/>
            <person name="Genin S."/>
            <person name="Artiguenave F."/>
            <person name="Gouzy J."/>
            <person name="Mangenot S."/>
            <person name="Arlat M."/>
            <person name="Billault A."/>
            <person name="Brottier P."/>
            <person name="Camus J.-C."/>
            <person name="Cattolico L."/>
            <person name="Chandler M."/>
            <person name="Choisne N."/>
            <person name="Claudel-Renard C."/>
            <person name="Cunnac S."/>
            <person name="Demange N."/>
            <person name="Gaspin C."/>
            <person name="Lavie M."/>
            <person name="Moisan A."/>
            <person name="Robert C."/>
            <person name="Saurin W."/>
            <person name="Schiex T."/>
            <person name="Siguier P."/>
            <person name="Thebault P."/>
            <person name="Whalen M."/>
            <person name="Wincker P."/>
            <person name="Levy M."/>
            <person name="Weissenbach J."/>
            <person name="Boucher C.A."/>
        </authorList>
    </citation>
    <scope>NUCLEOTIDE SEQUENCE [LARGE SCALE GENOMIC DNA]</scope>
    <source>
        <strain>ATCC BAA-1114 / GMI1000</strain>
    </source>
</reference>
<dbReference type="EC" id="1.4.3.16" evidence="1"/>
<dbReference type="EMBL" id="AL646052">
    <property type="protein sequence ID" value="CAD16154.1"/>
    <property type="molecule type" value="Genomic_DNA"/>
</dbReference>
<dbReference type="RefSeq" id="WP_011002364.1">
    <property type="nucleotide sequence ID" value="NC_003295.1"/>
</dbReference>
<dbReference type="SMR" id="Q8XWM7"/>
<dbReference type="STRING" id="267608.RSc2447"/>
<dbReference type="EnsemblBacteria" id="CAD16154">
    <property type="protein sequence ID" value="CAD16154"/>
    <property type="gene ID" value="RSc2447"/>
</dbReference>
<dbReference type="KEGG" id="rso:RSc2447"/>
<dbReference type="eggNOG" id="COG0029">
    <property type="taxonomic scope" value="Bacteria"/>
</dbReference>
<dbReference type="HOGENOM" id="CLU_014312_3_0_4"/>
<dbReference type="UniPathway" id="UPA00253">
    <property type="reaction ID" value="UER00326"/>
</dbReference>
<dbReference type="Proteomes" id="UP000001436">
    <property type="component" value="Chromosome"/>
</dbReference>
<dbReference type="GO" id="GO:0005737">
    <property type="term" value="C:cytoplasm"/>
    <property type="evidence" value="ECO:0007669"/>
    <property type="project" value="UniProtKB-SubCell"/>
</dbReference>
<dbReference type="GO" id="GO:0008734">
    <property type="term" value="F:L-aspartate oxidase activity"/>
    <property type="evidence" value="ECO:0007669"/>
    <property type="project" value="UniProtKB-EC"/>
</dbReference>
<dbReference type="GO" id="GO:0000166">
    <property type="term" value="F:nucleotide binding"/>
    <property type="evidence" value="ECO:0007669"/>
    <property type="project" value="UniProtKB-KW"/>
</dbReference>
<dbReference type="GO" id="GO:0034628">
    <property type="term" value="P:'de novo' NAD biosynthetic process from L-aspartate"/>
    <property type="evidence" value="ECO:0007669"/>
    <property type="project" value="TreeGrafter"/>
</dbReference>
<dbReference type="FunFam" id="1.20.58.100:FF:000002">
    <property type="entry name" value="L-aspartate oxidase"/>
    <property type="match status" value="1"/>
</dbReference>
<dbReference type="FunFam" id="3.90.700.10:FF:000002">
    <property type="entry name" value="L-aspartate oxidase"/>
    <property type="match status" value="1"/>
</dbReference>
<dbReference type="Gene3D" id="3.50.50.60">
    <property type="entry name" value="FAD/NAD(P)-binding domain"/>
    <property type="match status" value="1"/>
</dbReference>
<dbReference type="Gene3D" id="1.20.58.100">
    <property type="entry name" value="Fumarate reductase/succinate dehydrogenase flavoprotein-like, C-terminal domain"/>
    <property type="match status" value="1"/>
</dbReference>
<dbReference type="Gene3D" id="3.90.700.10">
    <property type="entry name" value="Succinate dehydrogenase/fumarate reductase flavoprotein, catalytic domain"/>
    <property type="match status" value="1"/>
</dbReference>
<dbReference type="InterPro" id="IPR003953">
    <property type="entry name" value="FAD-dep_OxRdtase_2_FAD-bd"/>
</dbReference>
<dbReference type="InterPro" id="IPR036188">
    <property type="entry name" value="FAD/NAD-bd_sf"/>
</dbReference>
<dbReference type="InterPro" id="IPR037099">
    <property type="entry name" value="Fum_R/Succ_DH_flav-like_C_sf"/>
</dbReference>
<dbReference type="InterPro" id="IPR015939">
    <property type="entry name" value="Fum_Rdtase/Succ_DH_flav-like_C"/>
</dbReference>
<dbReference type="InterPro" id="IPR005288">
    <property type="entry name" value="NadB"/>
</dbReference>
<dbReference type="InterPro" id="IPR027477">
    <property type="entry name" value="Succ_DH/fumarate_Rdtase_cat_sf"/>
</dbReference>
<dbReference type="NCBIfam" id="TIGR00551">
    <property type="entry name" value="nadB"/>
    <property type="match status" value="1"/>
</dbReference>
<dbReference type="NCBIfam" id="NF006567">
    <property type="entry name" value="PRK09077.1"/>
    <property type="match status" value="1"/>
</dbReference>
<dbReference type="PANTHER" id="PTHR42716">
    <property type="entry name" value="L-ASPARTATE OXIDASE"/>
    <property type="match status" value="1"/>
</dbReference>
<dbReference type="PANTHER" id="PTHR42716:SF2">
    <property type="entry name" value="L-ASPARTATE OXIDASE, CHLOROPLASTIC"/>
    <property type="match status" value="1"/>
</dbReference>
<dbReference type="Pfam" id="PF00890">
    <property type="entry name" value="FAD_binding_2"/>
    <property type="match status" value="1"/>
</dbReference>
<dbReference type="Pfam" id="PF02910">
    <property type="entry name" value="Succ_DH_flav_C"/>
    <property type="match status" value="1"/>
</dbReference>
<dbReference type="PRINTS" id="PR00368">
    <property type="entry name" value="FADPNR"/>
</dbReference>
<dbReference type="SUPFAM" id="SSF51905">
    <property type="entry name" value="FAD/NAD(P)-binding domain"/>
    <property type="match status" value="1"/>
</dbReference>
<dbReference type="SUPFAM" id="SSF46977">
    <property type="entry name" value="Succinate dehydrogenase/fumarate reductase flavoprotein C-terminal domain"/>
    <property type="match status" value="1"/>
</dbReference>
<dbReference type="SUPFAM" id="SSF56425">
    <property type="entry name" value="Succinate dehydrogenase/fumarate reductase flavoprotein, catalytic domain"/>
    <property type="match status" value="1"/>
</dbReference>
<sequence>MNFDVAVVGSGLAGLTVALHLADHRRVVVISKRTLPEGASDWAQGGIAAVLDSNDSHDEHVDDTLIAGAGLCDEAATRYIVENGRAAIEWLIGHGVPFTRDARAELGFHLTREGGHRHRRIIHAADATGHAVVTTLVDKVRAHPNITLLEDHFAIDLVTDAKLGLPGMRCHGLYVLDCKRGDVKTIIASQTVLATGGAGKVYLYTTNPDTATGDGIAMAWRAGCRVANMEFIQFHPTCLYHPFAKSFLISEAVRGEGGKLVLPDGTRFMPAHDERAELAPRDIVARAIDFEMKKRGLDCVYLDISHQSPAFIQEHFPTILARCLELGIDITRQPIPVVPAAHYTCGGVVTDQLGRTDIAGLYAVGETAYTGLHGANRLASNSLLECMVIGRGAAQDILGQPATAPTPTPIPAWDESRVTDADEEVVVSHNWDELRRMMWNYVGIVRTNKRLERAQHRIALLREEIAEYYANFRVSHDLLELRNLVEAASLIVDSALSRHESRGLHFSRDYPQTLPKALPTVMQPAHRRTSRKH</sequence>
<protein>
    <recommendedName>
        <fullName evidence="1">L-aspartate oxidase 1</fullName>
        <shortName evidence="1">LASPO 1</shortName>
        <ecNumber evidence="1">1.4.3.16</ecNumber>
    </recommendedName>
    <alternativeName>
        <fullName>Quinolinate synthase B 1</fullName>
    </alternativeName>
</protein>
<accession>Q8XWM7</accession>
<evidence type="ECO:0000250" key="1">
    <source>
        <dbReference type="UniProtKB" id="P10902"/>
    </source>
</evidence>
<evidence type="ECO:0000305" key="2"/>
<name>NADB1_RALN1</name>
<feature type="chain" id="PRO_0000184394" description="L-aspartate oxidase 1">
    <location>
        <begin position="1"/>
        <end position="533"/>
    </location>
</feature>
<feature type="active site" description="Proton donor/acceptor" evidence="1">
    <location>
        <position position="281"/>
    </location>
</feature>
<feature type="binding site" evidence="1">
    <location>
        <begin position="10"/>
        <end position="13"/>
    </location>
    <ligand>
        <name>FAD</name>
        <dbReference type="ChEBI" id="CHEBI:57692"/>
    </ligand>
</feature>
<feature type="binding site" evidence="1">
    <location>
        <position position="32"/>
    </location>
    <ligand>
        <name>FAD</name>
        <dbReference type="ChEBI" id="CHEBI:57692"/>
    </ligand>
</feature>
<feature type="binding site" evidence="1">
    <location>
        <begin position="39"/>
        <end position="46"/>
    </location>
    <ligand>
        <name>FAD</name>
        <dbReference type="ChEBI" id="CHEBI:57692"/>
    </ligand>
</feature>
<feature type="binding site" evidence="1">
    <location>
        <position position="214"/>
    </location>
    <ligand>
        <name>FAD</name>
        <dbReference type="ChEBI" id="CHEBI:57692"/>
    </ligand>
</feature>
<feature type="binding site" evidence="1">
    <location>
        <position position="366"/>
    </location>
    <ligand>
        <name>FAD</name>
        <dbReference type="ChEBI" id="CHEBI:57692"/>
    </ligand>
</feature>
<feature type="binding site" evidence="1">
    <location>
        <begin position="382"/>
        <end position="383"/>
    </location>
    <ligand>
        <name>FAD</name>
        <dbReference type="ChEBI" id="CHEBI:57692"/>
    </ligand>
</feature>
<feature type="site" description="Important in orienting the L-aspartate substrate" evidence="1">
    <location>
        <position position="113"/>
    </location>
</feature>
<proteinExistence type="inferred from homology"/>